<accession>P68357</accession>
<reference key="1">
    <citation type="journal article" date="1999" name="Plant Cell">
        <title>Arabidopsis cop8 and fus4 mutations define the same gene that encodes subunit 4 of the COP9 signalosome.</title>
        <authorList>
            <person name="Serino G."/>
            <person name="Tsuge T."/>
            <person name="Kwok S."/>
            <person name="Matsui M."/>
            <person name="Wei N."/>
            <person name="Deng X.-W."/>
        </authorList>
    </citation>
    <scope>PROTEIN SEQUENCE OF 1-12 AND 16-58</scope>
    <scope>COMPONENT OF THE CSN COMPLEX WITH CSN1; CSN2; CSN3; CSN4; CSN5; CSN7 AND CSN8</scope>
</reference>
<reference key="2">
    <citation type="journal article" date="2001" name="Plant Cell">
        <title>Molecular characterization of subunit 6 of the COP9 signalosome and its role in multifaceted developmental processes in Arabidopsis.</title>
        <authorList>
            <person name="Peng Z."/>
            <person name="Serino G."/>
            <person name="Deng X.-W."/>
        </authorList>
    </citation>
    <scope>PROTEIN SEQUENCE OF 1-39</scope>
</reference>
<comment type="function">
    <text evidence="1">Component of the COP9 signalosome complex (CSN), a complex involved in various cellular and developmental processes such as photomorphogenesis and auxin and jasmonate responses. The CSN complex is an essential regulator of the ubiquitin (Ubl) conjugation pathway by mediating the deneddylation of the cullin subunits of SCF-type E3 ligase complexes, leading to decrease the Ubl ligase activity of SCF. It is involved in repression of photomorphogenesis in darkness by regulating the activity of COP1-containing Ubl ligase complexes (By similarity).</text>
</comment>
<comment type="subunit">
    <text>Component of the CSN complex, probably composed of CSN1, CSN2, CSN3, CSN4, CSN5 (CSN5A or CSN5B), CSN6 (CSN6A or CSN6B), CSN7 and CSN8.</text>
</comment>
<comment type="subcellular location">
    <subcellularLocation>
        <location>Cytoplasm</location>
    </subcellularLocation>
    <subcellularLocation>
        <location>Nucleus</location>
    </subcellularLocation>
</comment>
<comment type="miscellaneous">
    <text>Although strongly related to metalloprotease proteins, it lacks the JAMM motif that probably constitutes the catalytic center. Its function as protease is therefore unsure.</text>
</comment>
<comment type="similarity">
    <text evidence="2">Belongs to the peptidase M67A family. CSN6 subfamily.</text>
</comment>
<feature type="chain" id="PRO_0000194868" description="COP9 signalosome complex subunit 6b">
    <location>
        <begin position="1" status="less than"/>
        <end position="58" status="greater than"/>
    </location>
</feature>
<feature type="non-consecutive residues" evidence="2">
    <location>
        <begin position="15"/>
        <end position="16"/>
    </location>
</feature>
<feature type="non-consecutive residues" evidence="2">
    <location>
        <begin position="39"/>
        <end position="40"/>
    </location>
</feature>
<feature type="non-terminal residue">
    <location>
        <position position="1"/>
    </location>
</feature>
<feature type="non-terminal residue">
    <location>
        <position position="58"/>
    </location>
</feature>
<proteinExistence type="evidence at protein level"/>
<protein>
    <recommendedName>
        <fullName>COP9 signalosome complex subunit 6b</fullName>
        <shortName>Signalosome subunit 6b</shortName>
    </recommendedName>
</protein>
<evidence type="ECO:0000250" key="1"/>
<evidence type="ECO:0000305" key="2"/>
<gene>
    <name type="primary">CSN6B</name>
</gene>
<sequence>KLHPLVMLNISDHLTKALMDINESPVYVLLNPTINHAQKKMLNSRIRVLHQYLGSMQK</sequence>
<keyword id="KW-0963">Cytoplasm</keyword>
<keyword id="KW-0217">Developmental protein</keyword>
<keyword id="KW-0903">Direct protein sequencing</keyword>
<keyword id="KW-0539">Nucleus</keyword>
<keyword id="KW-0607">Phytochrome signaling pathway</keyword>
<keyword id="KW-0736">Signalosome</keyword>
<dbReference type="IntAct" id="P68357">
    <property type="interactions" value="1"/>
</dbReference>
<dbReference type="GO" id="GO:0008180">
    <property type="term" value="C:COP9 signalosome"/>
    <property type="evidence" value="ECO:0007669"/>
    <property type="project" value="UniProtKB-KW"/>
</dbReference>
<dbReference type="GO" id="GO:0005737">
    <property type="term" value="C:cytoplasm"/>
    <property type="evidence" value="ECO:0007669"/>
    <property type="project" value="UniProtKB-SubCell"/>
</dbReference>
<dbReference type="GO" id="GO:0009585">
    <property type="term" value="P:red, far-red light phototransduction"/>
    <property type="evidence" value="ECO:0007669"/>
    <property type="project" value="UniProtKB-KW"/>
</dbReference>
<name>CSN6B_BRAOL</name>
<organism>
    <name type="scientific">Brassica oleracea</name>
    <name type="common">Wild cabbage</name>
    <dbReference type="NCBI Taxonomy" id="3712"/>
    <lineage>
        <taxon>Eukaryota</taxon>
        <taxon>Viridiplantae</taxon>
        <taxon>Streptophyta</taxon>
        <taxon>Embryophyta</taxon>
        <taxon>Tracheophyta</taxon>
        <taxon>Spermatophyta</taxon>
        <taxon>Magnoliopsida</taxon>
        <taxon>eudicotyledons</taxon>
        <taxon>Gunneridae</taxon>
        <taxon>Pentapetalae</taxon>
        <taxon>rosids</taxon>
        <taxon>malvids</taxon>
        <taxon>Brassicales</taxon>
        <taxon>Brassicaceae</taxon>
        <taxon>Brassiceae</taxon>
        <taxon>Brassica</taxon>
    </lineage>
</organism>